<keyword id="KW-0028">Amino-acid biosynthesis</keyword>
<keyword id="KW-0479">Metal-binding</keyword>
<keyword id="KW-0486">Methionine biosynthesis</keyword>
<keyword id="KW-0489">Methyltransferase</keyword>
<keyword id="KW-0677">Repeat</keyword>
<keyword id="KW-0808">Transferase</keyword>
<keyword id="KW-0862">Zinc</keyword>
<comment type="function">
    <text evidence="1">Catalyzes the transfer of a methyl group from 5-methyltetrahydrofolate to homocysteine resulting in methionine formation.</text>
</comment>
<comment type="catalytic activity">
    <reaction evidence="1">
        <text>5-methyltetrahydropteroyltri-L-glutamate + L-homocysteine = tetrahydropteroyltri-L-glutamate + L-methionine</text>
        <dbReference type="Rhea" id="RHEA:21196"/>
        <dbReference type="ChEBI" id="CHEBI:57844"/>
        <dbReference type="ChEBI" id="CHEBI:58140"/>
        <dbReference type="ChEBI" id="CHEBI:58199"/>
        <dbReference type="ChEBI" id="CHEBI:58207"/>
        <dbReference type="EC" id="2.1.1.14"/>
    </reaction>
</comment>
<comment type="cofactor">
    <cofactor evidence="1">
        <name>Zn(2+)</name>
        <dbReference type="ChEBI" id="CHEBI:29105"/>
    </cofactor>
    <text evidence="1">Binds 1 zinc ion per subunit.</text>
</comment>
<comment type="pathway">
    <text evidence="1">Amino-acid biosynthesis; L-methionine biosynthesis via de novo pathway; L-methionine from L-homocysteine (MetE route): step 1/1.</text>
</comment>
<comment type="similarity">
    <text evidence="1">Belongs to the vitamin-B12 independent methionine synthase family.</text>
</comment>
<organism>
    <name type="scientific">Chelativorans sp. (strain BNC1)</name>
    <dbReference type="NCBI Taxonomy" id="266779"/>
    <lineage>
        <taxon>Bacteria</taxon>
        <taxon>Pseudomonadati</taxon>
        <taxon>Pseudomonadota</taxon>
        <taxon>Alphaproteobacteria</taxon>
        <taxon>Hyphomicrobiales</taxon>
        <taxon>Phyllobacteriaceae</taxon>
        <taxon>Chelativorans</taxon>
    </lineage>
</organism>
<reference key="1">
    <citation type="submission" date="2006-06" db="EMBL/GenBank/DDBJ databases">
        <title>Complete sequence of chromosome of Mesorhizobium sp. BNC1.</title>
        <authorList>
            <consortium name="US DOE Joint Genome Institute"/>
            <person name="Copeland A."/>
            <person name="Lucas S."/>
            <person name="Lapidus A."/>
            <person name="Barry K."/>
            <person name="Detter J.C."/>
            <person name="Glavina del Rio T."/>
            <person name="Hammon N."/>
            <person name="Israni S."/>
            <person name="Dalin E."/>
            <person name="Tice H."/>
            <person name="Pitluck S."/>
            <person name="Chertkov O."/>
            <person name="Brettin T."/>
            <person name="Bruce D."/>
            <person name="Han C."/>
            <person name="Tapia R."/>
            <person name="Gilna P."/>
            <person name="Schmutz J."/>
            <person name="Larimer F."/>
            <person name="Land M."/>
            <person name="Hauser L."/>
            <person name="Kyrpides N."/>
            <person name="Mikhailova N."/>
            <person name="Richardson P."/>
        </authorList>
    </citation>
    <scope>NUCLEOTIDE SEQUENCE [LARGE SCALE GENOMIC DNA]</scope>
    <source>
        <strain>BNC1</strain>
    </source>
</reference>
<dbReference type="EC" id="2.1.1.14" evidence="1"/>
<dbReference type="EMBL" id="CP000390">
    <property type="protein sequence ID" value="ABG64078.1"/>
    <property type="molecule type" value="Genomic_DNA"/>
</dbReference>
<dbReference type="SMR" id="Q11EU7"/>
<dbReference type="STRING" id="266779.Meso_2701"/>
<dbReference type="KEGG" id="mes:Meso_2701"/>
<dbReference type="eggNOG" id="COG0620">
    <property type="taxonomic scope" value="Bacteria"/>
</dbReference>
<dbReference type="HOGENOM" id="CLU_013175_0_0_5"/>
<dbReference type="OrthoDB" id="244285at2"/>
<dbReference type="UniPathway" id="UPA00051">
    <property type="reaction ID" value="UER00082"/>
</dbReference>
<dbReference type="GO" id="GO:0003871">
    <property type="term" value="F:5-methyltetrahydropteroyltriglutamate-homocysteine S-methyltransferase activity"/>
    <property type="evidence" value="ECO:0007669"/>
    <property type="project" value="UniProtKB-UniRule"/>
</dbReference>
<dbReference type="GO" id="GO:0008270">
    <property type="term" value="F:zinc ion binding"/>
    <property type="evidence" value="ECO:0007669"/>
    <property type="project" value="InterPro"/>
</dbReference>
<dbReference type="GO" id="GO:0009086">
    <property type="term" value="P:methionine biosynthetic process"/>
    <property type="evidence" value="ECO:0007669"/>
    <property type="project" value="UniProtKB-UniRule"/>
</dbReference>
<dbReference type="GO" id="GO:0032259">
    <property type="term" value="P:methylation"/>
    <property type="evidence" value="ECO:0007669"/>
    <property type="project" value="UniProtKB-KW"/>
</dbReference>
<dbReference type="CDD" id="cd03311">
    <property type="entry name" value="CIMS_C_terminal_like"/>
    <property type="match status" value="1"/>
</dbReference>
<dbReference type="CDD" id="cd03312">
    <property type="entry name" value="CIMS_N_terminal_like"/>
    <property type="match status" value="1"/>
</dbReference>
<dbReference type="FunFam" id="3.20.20.210:FF:000002">
    <property type="entry name" value="5-methyltetrahydropteroyltriglutamate--homocysteine methyltransferase"/>
    <property type="match status" value="1"/>
</dbReference>
<dbReference type="FunFam" id="3.20.20.210:FF:000003">
    <property type="entry name" value="5-methyltetrahydropteroyltriglutamate--homocysteine methyltransferase"/>
    <property type="match status" value="1"/>
</dbReference>
<dbReference type="Gene3D" id="3.20.20.210">
    <property type="match status" value="2"/>
</dbReference>
<dbReference type="HAMAP" id="MF_00172">
    <property type="entry name" value="Meth_synth"/>
    <property type="match status" value="1"/>
</dbReference>
<dbReference type="InterPro" id="IPR013215">
    <property type="entry name" value="Cbl-indep_Met_Synth_N"/>
</dbReference>
<dbReference type="InterPro" id="IPR006276">
    <property type="entry name" value="Cobalamin-indep_Met_synthase"/>
</dbReference>
<dbReference type="InterPro" id="IPR002629">
    <property type="entry name" value="Met_Synth_C/arc"/>
</dbReference>
<dbReference type="InterPro" id="IPR038071">
    <property type="entry name" value="UROD/MetE-like_sf"/>
</dbReference>
<dbReference type="NCBIfam" id="TIGR01371">
    <property type="entry name" value="met_syn_B12ind"/>
    <property type="match status" value="1"/>
</dbReference>
<dbReference type="NCBIfam" id="NF003556">
    <property type="entry name" value="PRK05222.1"/>
    <property type="match status" value="1"/>
</dbReference>
<dbReference type="PANTHER" id="PTHR30519">
    <property type="entry name" value="5-METHYLTETRAHYDROPTEROYLTRIGLUTAMATE--HOMOCYSTEINE METHYLTRANSFERASE"/>
    <property type="match status" value="1"/>
</dbReference>
<dbReference type="Pfam" id="PF08267">
    <property type="entry name" value="Meth_synt_1"/>
    <property type="match status" value="1"/>
</dbReference>
<dbReference type="Pfam" id="PF01717">
    <property type="entry name" value="Meth_synt_2"/>
    <property type="match status" value="1"/>
</dbReference>
<dbReference type="PIRSF" id="PIRSF000382">
    <property type="entry name" value="MeTrfase_B12_ind"/>
    <property type="match status" value="1"/>
</dbReference>
<dbReference type="SUPFAM" id="SSF51726">
    <property type="entry name" value="UROD/MetE-like"/>
    <property type="match status" value="2"/>
</dbReference>
<proteinExistence type="inferred from homology"/>
<protein>
    <recommendedName>
        <fullName evidence="1">5-methyltetrahydropteroyltriglutamate--homocysteine methyltransferase</fullName>
        <ecNumber evidence="1">2.1.1.14</ecNumber>
    </recommendedName>
    <alternativeName>
        <fullName evidence="1">Cobalamin-independent methionine synthase</fullName>
    </alternativeName>
    <alternativeName>
        <fullName evidence="1">Methionine synthase, vitamin-B12 independent isozyme</fullName>
    </alternativeName>
</protein>
<sequence>MSQIPVATLGVPRIGRRRELKFALEAYWGGESSEGELLAAAAKIRAENWSLQKAAGASIIPSNDFTLYDHVLDMAVTLGAIPEIYGWAGGAVPLDTYFAMARGSQEREACGHSHHDGTGVPALEMTKWFDTNYHYMVPEFDADQTFRLASLKPVEEFDEAKRQGIHTRPVLLGPVSFLKLGKRRDGGDPLELLPRLVPVYAELLGKLLRAGADWVQIDEPCLVLDLTERERRAFTIAYDALAATGGPKLMLATYFGGLGDNLPTAAALPVAGLHLDLVRAPDQLQDVLSAAPEERVISLGVVDGRNIWRTDIAALLDRLGPIVKGNPGRFQLAPSCSLLHVPLDLSIETGVDPELRSWLAFAVQKVEELSILSHALSADRSLVQSLIDMASRALAVRASSTRVNDPHVAGRLSAVTPEMAKRSEPFSERRKLQQERLNLPAFPTTTIGSFPQTAEVRQARAACAKGELSEAGYDGFLKGETEKAIRWQEEIGIDVLVHGEFERNDMVQYFSEQLSGYAFTKQGWVQSYGSRCVRPPIIFGDVSRPQPMTVDWATYAQSLTDKPVKGMLTGPVTMLQWSFVRDDLPRETVCRQIAFALRDEVSDLEAAGIGVIQIDEPALREGLPLREAERPAYLDWAVECFRLASSGVKPETQIHTHMCYAEFNDIIDAIAAMDADVISIETSRSKMELLRAFRAFRYPNDIGPGVFDIHSPRVPPADEMADLLRKAEDGLDPRQIWVNPDCGLKTRKWEEVRFALANMVEAARQMRAG</sequence>
<feature type="chain" id="PRO_1000071612" description="5-methyltetrahydropteroyltriglutamate--homocysteine methyltransferase">
    <location>
        <begin position="1"/>
        <end position="769"/>
    </location>
</feature>
<feature type="active site" description="Proton donor" evidence="1">
    <location>
        <position position="710"/>
    </location>
</feature>
<feature type="binding site" evidence="1">
    <location>
        <begin position="18"/>
        <end position="21"/>
    </location>
    <ligand>
        <name>5-methyltetrahydropteroyltri-L-glutamate</name>
        <dbReference type="ChEBI" id="CHEBI:58207"/>
    </ligand>
</feature>
<feature type="binding site" evidence="1">
    <location>
        <position position="127"/>
    </location>
    <ligand>
        <name>5-methyltetrahydropteroyltri-L-glutamate</name>
        <dbReference type="ChEBI" id="CHEBI:58207"/>
    </ligand>
</feature>
<feature type="binding site" evidence="1">
    <location>
        <begin position="447"/>
        <end position="449"/>
    </location>
    <ligand>
        <name>L-homocysteine</name>
        <dbReference type="ChEBI" id="CHEBI:58199"/>
    </ligand>
</feature>
<feature type="binding site" evidence="1">
    <location>
        <begin position="447"/>
        <end position="449"/>
    </location>
    <ligand>
        <name>L-methionine</name>
        <dbReference type="ChEBI" id="CHEBI:57844"/>
    </ligand>
</feature>
<feature type="binding site" evidence="1">
    <location>
        <position position="500"/>
    </location>
    <ligand>
        <name>L-homocysteine</name>
        <dbReference type="ChEBI" id="CHEBI:58199"/>
    </ligand>
</feature>
<feature type="binding site" evidence="1">
    <location>
        <position position="500"/>
    </location>
    <ligand>
        <name>L-methionine</name>
        <dbReference type="ChEBI" id="CHEBI:57844"/>
    </ligand>
</feature>
<feature type="binding site" evidence="1">
    <location>
        <begin position="531"/>
        <end position="532"/>
    </location>
    <ligand>
        <name>5-methyltetrahydropteroyltri-L-glutamate</name>
        <dbReference type="ChEBI" id="CHEBI:58207"/>
    </ligand>
</feature>
<feature type="binding site" evidence="1">
    <location>
        <position position="577"/>
    </location>
    <ligand>
        <name>5-methyltetrahydropteroyltri-L-glutamate</name>
        <dbReference type="ChEBI" id="CHEBI:58207"/>
    </ligand>
</feature>
<feature type="binding site" evidence="1">
    <location>
        <position position="615"/>
    </location>
    <ligand>
        <name>L-homocysteine</name>
        <dbReference type="ChEBI" id="CHEBI:58199"/>
    </ligand>
</feature>
<feature type="binding site" evidence="1">
    <location>
        <position position="615"/>
    </location>
    <ligand>
        <name>L-methionine</name>
        <dbReference type="ChEBI" id="CHEBI:57844"/>
    </ligand>
</feature>
<feature type="binding site" evidence="1">
    <location>
        <position position="621"/>
    </location>
    <ligand>
        <name>5-methyltetrahydropteroyltri-L-glutamate</name>
        <dbReference type="ChEBI" id="CHEBI:58207"/>
    </ligand>
</feature>
<feature type="binding site" evidence="1">
    <location>
        <position position="657"/>
    </location>
    <ligand>
        <name>Zn(2+)</name>
        <dbReference type="ChEBI" id="CHEBI:29105"/>
        <note>catalytic</note>
    </ligand>
</feature>
<feature type="binding site" evidence="1">
    <location>
        <position position="659"/>
    </location>
    <ligand>
        <name>Zn(2+)</name>
        <dbReference type="ChEBI" id="CHEBI:29105"/>
        <note>catalytic</note>
    </ligand>
</feature>
<feature type="binding site" evidence="1">
    <location>
        <position position="681"/>
    </location>
    <ligand>
        <name>Zn(2+)</name>
        <dbReference type="ChEBI" id="CHEBI:29105"/>
        <note>catalytic</note>
    </ligand>
</feature>
<feature type="binding site" evidence="1">
    <location>
        <position position="742"/>
    </location>
    <ligand>
        <name>Zn(2+)</name>
        <dbReference type="ChEBI" id="CHEBI:29105"/>
        <note>catalytic</note>
    </ligand>
</feature>
<evidence type="ECO:0000255" key="1">
    <source>
        <dbReference type="HAMAP-Rule" id="MF_00172"/>
    </source>
</evidence>
<name>METE_CHESB</name>
<gene>
    <name evidence="1" type="primary">metE</name>
    <name type="ordered locus">Meso_2701</name>
</gene>
<accession>Q11EU7</accession>